<dbReference type="EMBL" id="DQ468383">
    <property type="protein sequence ID" value="ABE97202.1"/>
    <property type="molecule type" value="mRNA"/>
</dbReference>
<dbReference type="PDB" id="2X2S">
    <property type="method" value="X-ray"/>
    <property type="resolution" value="1.60 A"/>
    <property type="chains" value="A/B/C/D=1-153"/>
</dbReference>
<dbReference type="PDB" id="2X2T">
    <property type="method" value="X-ray"/>
    <property type="resolution" value="1.97 A"/>
    <property type="chains" value="A=1-153"/>
</dbReference>
<dbReference type="PDBsum" id="2X2S"/>
<dbReference type="PDBsum" id="2X2T"/>
<dbReference type="SMR" id="A7XUK7"/>
<dbReference type="UniLectin" id="A7XUK7"/>
<dbReference type="VEuPathDB" id="FungiDB:sscle_01g001830"/>
<dbReference type="OMA" id="GNGAFYI"/>
<dbReference type="EvolutionaryTrace" id="A7XUK7"/>
<dbReference type="GO" id="GO:0030246">
    <property type="term" value="F:carbohydrate binding"/>
    <property type="evidence" value="ECO:0007669"/>
    <property type="project" value="UniProtKB-KW"/>
</dbReference>
<dbReference type="Gene3D" id="2.80.10.50">
    <property type="match status" value="1"/>
</dbReference>
<dbReference type="InterPro" id="IPR035992">
    <property type="entry name" value="Ricin_B-like_lectins"/>
</dbReference>
<dbReference type="InterPro" id="IPR000772">
    <property type="entry name" value="Ricin_B_lectin"/>
</dbReference>
<dbReference type="Pfam" id="PF14200">
    <property type="entry name" value="RicinB_lectin_2"/>
    <property type="match status" value="1"/>
</dbReference>
<dbReference type="SUPFAM" id="SSF50370">
    <property type="entry name" value="Ricin B-like lectins"/>
    <property type="match status" value="1"/>
</dbReference>
<sequence length="153" mass="16740">MGFKGVGTYEIVPYQAPSLNLNAWEGKLEPGAVVRTYTRGDKPSDNAKWQVALVAGSGDSAEYLIINVHSGYFLTATKENHIVSTPQISPTDPSARWTIKPATTHQYEVFTINNKVSELGQLTVKDYSTHSGADVLSASAKTADNQKWYFDAK</sequence>
<proteinExistence type="evidence at protein level"/>
<feature type="initiator methionine" description="Removed" evidence="2">
    <location>
        <position position="1"/>
    </location>
</feature>
<feature type="chain" id="PRO_0000424170" description="Agglutinin" evidence="2">
    <location>
        <begin position="2"/>
        <end position="153"/>
    </location>
</feature>
<feature type="domain" description="Ricin B-type lectin" evidence="1">
    <location>
        <begin position="58"/>
        <end position="153"/>
    </location>
</feature>
<feature type="binding site" evidence="4 9">
    <location>
        <begin position="22"/>
        <end position="25"/>
    </location>
    <ligand>
        <name>beta-D-galactosyl-(1-&gt;3)-N-acetyl-D-galactosamine</name>
        <dbReference type="ChEBI" id="CHEBI:546807"/>
    </ligand>
</feature>
<feature type="binding site" evidence="4 9">
    <location>
        <position position="46"/>
    </location>
    <ligand>
        <name>beta-D-galactosyl-(1-&gt;3)-N-acetyl-D-galactosamine</name>
        <dbReference type="ChEBI" id="CHEBI:546807"/>
    </ligand>
</feature>
<feature type="sequence conflict" description="In Ref. 2; AA sequence." evidence="6" ref="2">
    <original>G</original>
    <variation>V</variation>
    <location>
        <position position="2"/>
    </location>
</feature>
<feature type="sequence conflict" description="In Ref. 2; AA sequence." evidence="6" ref="2">
    <original>K</original>
    <variation>L</variation>
    <location>
        <position position="4"/>
    </location>
</feature>
<feature type="strand" evidence="10">
    <location>
        <begin position="5"/>
        <end position="13"/>
    </location>
</feature>
<feature type="strand" evidence="10">
    <location>
        <begin position="19"/>
        <end position="23"/>
    </location>
</feature>
<feature type="strand" evidence="11">
    <location>
        <begin position="28"/>
        <end position="30"/>
    </location>
</feature>
<feature type="strand" evidence="10">
    <location>
        <begin position="32"/>
        <end position="38"/>
    </location>
</feature>
<feature type="helix" evidence="10">
    <location>
        <begin position="45"/>
        <end position="47"/>
    </location>
</feature>
<feature type="strand" evidence="10">
    <location>
        <begin position="49"/>
        <end position="55"/>
    </location>
</feature>
<feature type="helix" evidence="10">
    <location>
        <begin position="58"/>
        <end position="60"/>
    </location>
</feature>
<feature type="strand" evidence="10">
    <location>
        <begin position="62"/>
        <end position="67"/>
    </location>
</feature>
<feature type="turn" evidence="10">
    <location>
        <begin position="68"/>
        <end position="70"/>
    </location>
</feature>
<feature type="helix" evidence="10">
    <location>
        <begin position="93"/>
        <end position="95"/>
    </location>
</feature>
<feature type="strand" evidence="10">
    <location>
        <begin position="97"/>
        <end position="102"/>
    </location>
</feature>
<feature type="strand" evidence="10">
    <location>
        <begin position="110"/>
        <end position="116"/>
    </location>
</feature>
<feature type="helix" evidence="10">
    <location>
        <begin position="117"/>
        <end position="119"/>
    </location>
</feature>
<feature type="strand" evidence="10">
    <location>
        <begin position="121"/>
        <end position="124"/>
    </location>
</feature>
<feature type="helix" evidence="10">
    <location>
        <begin position="125"/>
        <end position="127"/>
    </location>
</feature>
<feature type="strand" evidence="10">
    <location>
        <begin position="134"/>
        <end position="138"/>
    </location>
</feature>
<feature type="helix" evidence="10">
    <location>
        <begin position="144"/>
        <end position="146"/>
    </location>
</feature>
<feature type="strand" evidence="10">
    <location>
        <begin position="148"/>
        <end position="152"/>
    </location>
</feature>
<evidence type="ECO:0000255" key="1"/>
<evidence type="ECO:0000269" key="2">
    <source>
    </source>
</evidence>
<evidence type="ECO:0000269" key="3">
    <source>
    </source>
</evidence>
<evidence type="ECO:0000269" key="4">
    <source>
    </source>
</evidence>
<evidence type="ECO:0000303" key="5">
    <source>
    </source>
</evidence>
<evidence type="ECO:0000305" key="6"/>
<evidence type="ECO:0000312" key="7">
    <source>
        <dbReference type="EMBL" id="ABE97202.1"/>
    </source>
</evidence>
<evidence type="ECO:0000312" key="8">
    <source>
        <dbReference type="PDB" id="2X2T"/>
    </source>
</evidence>
<evidence type="ECO:0007744" key="9">
    <source>
        <dbReference type="PDB" id="2X2T"/>
    </source>
</evidence>
<evidence type="ECO:0007829" key="10">
    <source>
        <dbReference type="PDB" id="2X2S"/>
    </source>
</evidence>
<evidence type="ECO:0007829" key="11">
    <source>
        <dbReference type="PDB" id="2X2T"/>
    </source>
</evidence>
<organism>
    <name type="scientific">Sclerotinia sclerotiorum</name>
    <name type="common">White mold</name>
    <name type="synonym">Whetzelinia sclerotiorum</name>
    <dbReference type="NCBI Taxonomy" id="5180"/>
    <lineage>
        <taxon>Eukaryota</taxon>
        <taxon>Fungi</taxon>
        <taxon>Dikarya</taxon>
        <taxon>Ascomycota</taxon>
        <taxon>Pezizomycotina</taxon>
        <taxon>Leotiomycetes</taxon>
        <taxon>Helotiales</taxon>
        <taxon>Sclerotiniaceae</taxon>
        <taxon>Sclerotinia</taxon>
    </lineage>
</organism>
<comment type="function">
    <text evidence="2 3 4">Lectin that primarily recognizes glycans with a non-reducing terminal N-acetylgalactosamine (GalNAc), with a preference for the alpha- over the beta-anomer. Can also bind non-reducing terminal galactose (Gal) residues but with a lower affinity. Strongly interacts with glycolipid type glycans with terminal non-reducing Gal or GalNAc but fails to bind sialylated or fucosylated forms of the same glycans. Strongly interacts with galactosylated N-glycans, displaying highest affinity for alpha-1-3 branched mono-antennary N-glycans but also binding to multi-antennary glycans.</text>
</comment>
<comment type="subunit">
    <text evidence="2 4">Homodimer.</text>
</comment>
<comment type="mass spectrometry" mass="16618.0" error="2.0" method="Electrospray" evidence="2"/>
<accession>A7XUK7</accession>
<keyword id="KW-0002">3D-structure</keyword>
<keyword id="KW-0903">Direct protein sequencing</keyword>
<keyword id="KW-0430">Lectin</keyword>
<name>AGGL_SCLSC</name>
<protein>
    <recommendedName>
        <fullName evidence="7">Agglutinin</fullName>
        <shortName evidence="5">SSA</shortName>
    </recommendedName>
</protein>
<reference evidence="6 7" key="1">
    <citation type="journal article" date="2007" name="Glycoconj. J.">
        <title>The Sclerotinia sclerotiorum agglutinin represents a novel family of fungal lectins remotely related to the Clostridium botulinum non-toxin haemagglutinin HA33/A.</title>
        <authorList>
            <person name="Van Damme E.J."/>
            <person name="Nakamura-Tsuruta S."/>
            <person name="Hirabayashi J."/>
            <person name="Rouge P."/>
            <person name="Peumans W.J."/>
        </authorList>
    </citation>
    <scope>NUCLEOTIDE SEQUENCE [MRNA]</scope>
    <scope>FUNCTION</scope>
    <source>
        <strain evidence="3">S1954</strain>
        <tissue evidence="3">Sclerotium</tissue>
    </source>
</reference>
<reference evidence="6" key="2">
    <citation type="journal article" date="2003" name="Biochem. Biophys. Res. Commun.">
        <title>Structural and functional characterization of the GalNAc/Gal-specific lectin from the phytopathogenic ascomycete Sclerotinia sclerotiorum (Lib.) de Bary.</title>
        <authorList>
            <person name="Candy L."/>
            <person name="Van Damme E.J."/>
            <person name="Peumans W.J."/>
            <person name="Menu-Bouaouiche L."/>
            <person name="Erard M."/>
            <person name="Rouge P."/>
        </authorList>
    </citation>
    <scope>PROTEIN SEQUENCE OF 2-20</scope>
    <scope>FUNCTION</scope>
    <scope>SUBUNIT</scope>
    <scope>MASS SPECTROMETRY</scope>
    <scope>CLEAVAGE OF INITIATOR METHIONINE</scope>
</reference>
<reference evidence="6 8" key="3">
    <citation type="journal article" date="2010" name="J. Mol. Biol.">
        <title>Crystal structure of the GalNAc/Gal-specific agglutinin from the phytopathogenic ascomycete Sclerotinia sclerotiorum reveals novel adaptation of a beta-trefoil domain.</title>
        <authorList>
            <person name="Sulzenbacher G."/>
            <person name="Roig-Zamboni V."/>
            <person name="Peumans W.J."/>
            <person name="Rouge P."/>
            <person name="Van Damme E.J."/>
            <person name="Bourne Y."/>
        </authorList>
    </citation>
    <scope>X-RAY CRYSTALLOGRAPHY (1.60 ANGSTROMS) IN COMPLEX WITH GALACTOSE-BETA-1,3-N-ACETYL-D-GALACTOSAMINE</scope>
    <scope>FUNCTION</scope>
    <scope>SUBUNIT</scope>
</reference>